<name>ADE_CHLPB</name>
<protein>
    <recommendedName>
        <fullName evidence="1">Adenine deaminase</fullName>
        <shortName evidence="1">ADE</shortName>
        <ecNumber evidence="1">3.5.4.2</ecNumber>
    </recommendedName>
    <alternativeName>
        <fullName evidence="1">Adenine aminohydrolase</fullName>
        <shortName evidence="1">AAH</shortName>
    </alternativeName>
</protein>
<keyword id="KW-0378">Hydrolase</keyword>
<keyword id="KW-0479">Metal-binding</keyword>
<keyword id="KW-0546">Nucleotide metabolism</keyword>
<keyword id="KW-0862">Zinc</keyword>
<gene>
    <name type="ordered locus">Cphamn1_1745</name>
</gene>
<sequence>MNEYIKGLPKAELHLHIEGTLEPEMMIDIGKRNGVPLPYPDAEAAREAYAFKDLQSFLDIYYQAASVLLCEQDFYDLTMAYLKKARSQNVRHAEIFFDPQTHTSRGIAFDTVITGINNALRDGEQNLGITSKLIMCILRHLSQDEGLKTLEQALEYKGVIAGIGLDSSELGNPPDKFRSLYERAHKEGFLTVAHAGEEGHADYIWQALNTLHVARIDHGVHCMEDETLIHTLVERQIPLTVCPLSNVRLGVFSSMEEHNLKKMLDRELSVTVNSDDPAYFGGYVNENYLAVQQALTLERKDLVRLAVNSFTASFLTQEKKQQHIAAIHTFDKNIT</sequence>
<organism>
    <name type="scientific">Chlorobium phaeobacteroides (strain BS1)</name>
    <dbReference type="NCBI Taxonomy" id="331678"/>
    <lineage>
        <taxon>Bacteria</taxon>
        <taxon>Pseudomonadati</taxon>
        <taxon>Chlorobiota</taxon>
        <taxon>Chlorobiia</taxon>
        <taxon>Chlorobiales</taxon>
        <taxon>Chlorobiaceae</taxon>
        <taxon>Chlorobium/Pelodictyon group</taxon>
        <taxon>Chlorobium</taxon>
    </lineage>
</organism>
<comment type="function">
    <text evidence="1">Catalyzes the hydrolytic deamination of adenine to hypoxanthine. Plays an important role in the purine salvage pathway and in nitrogen catabolism.</text>
</comment>
<comment type="catalytic activity">
    <reaction evidence="1">
        <text>adenine + H2O + H(+) = hypoxanthine + NH4(+)</text>
        <dbReference type="Rhea" id="RHEA:23688"/>
        <dbReference type="ChEBI" id="CHEBI:15377"/>
        <dbReference type="ChEBI" id="CHEBI:15378"/>
        <dbReference type="ChEBI" id="CHEBI:16708"/>
        <dbReference type="ChEBI" id="CHEBI:17368"/>
        <dbReference type="ChEBI" id="CHEBI:28938"/>
        <dbReference type="EC" id="3.5.4.2"/>
    </reaction>
</comment>
<comment type="cofactor">
    <cofactor evidence="1">
        <name>Zn(2+)</name>
        <dbReference type="ChEBI" id="CHEBI:29105"/>
    </cofactor>
    <text evidence="1">Binds 1 zinc ion per subunit.</text>
</comment>
<comment type="similarity">
    <text evidence="1">Belongs to the metallo-dependent hydrolases superfamily. Adenosine and AMP deaminases family. Adenine deaminase type 2 subfamily.</text>
</comment>
<proteinExistence type="inferred from homology"/>
<feature type="chain" id="PRO_1000146566" description="Adenine deaminase">
    <location>
        <begin position="1"/>
        <end position="335"/>
    </location>
</feature>
<feature type="active site" description="Proton donor" evidence="1">
    <location>
        <position position="197"/>
    </location>
</feature>
<feature type="binding site" evidence="1">
    <location>
        <position position="14"/>
    </location>
    <ligand>
        <name>Zn(2+)</name>
        <dbReference type="ChEBI" id="CHEBI:29105"/>
        <note>catalytic</note>
    </ligand>
</feature>
<feature type="binding site" evidence="1">
    <location>
        <position position="16"/>
    </location>
    <ligand>
        <name>Zn(2+)</name>
        <dbReference type="ChEBI" id="CHEBI:29105"/>
        <note>catalytic</note>
    </ligand>
</feature>
<feature type="binding site" evidence="1">
    <location>
        <position position="194"/>
    </location>
    <ligand>
        <name>Zn(2+)</name>
        <dbReference type="ChEBI" id="CHEBI:29105"/>
        <note>catalytic</note>
    </ligand>
</feature>
<feature type="binding site" evidence="1">
    <location>
        <position position="275"/>
    </location>
    <ligand>
        <name>Zn(2+)</name>
        <dbReference type="ChEBI" id="CHEBI:29105"/>
        <note>catalytic</note>
    </ligand>
</feature>
<feature type="binding site" evidence="1">
    <location>
        <position position="276"/>
    </location>
    <ligand>
        <name>substrate</name>
    </ligand>
</feature>
<feature type="site" description="Important for catalytic activity" evidence="1">
    <location>
        <position position="218"/>
    </location>
</feature>
<reference key="1">
    <citation type="submission" date="2008-06" db="EMBL/GenBank/DDBJ databases">
        <title>Complete sequence of Chlorobium phaeobacteroides BS1.</title>
        <authorList>
            <consortium name="US DOE Joint Genome Institute"/>
            <person name="Lucas S."/>
            <person name="Copeland A."/>
            <person name="Lapidus A."/>
            <person name="Glavina del Rio T."/>
            <person name="Dalin E."/>
            <person name="Tice H."/>
            <person name="Bruce D."/>
            <person name="Goodwin L."/>
            <person name="Pitluck S."/>
            <person name="Schmutz J."/>
            <person name="Larimer F."/>
            <person name="Land M."/>
            <person name="Hauser L."/>
            <person name="Kyrpides N."/>
            <person name="Ovchinnikova G."/>
            <person name="Li T."/>
            <person name="Liu Z."/>
            <person name="Zhao F."/>
            <person name="Overmann J."/>
            <person name="Bryant D.A."/>
            <person name="Richardson P."/>
        </authorList>
    </citation>
    <scope>NUCLEOTIDE SEQUENCE [LARGE SCALE GENOMIC DNA]</scope>
    <source>
        <strain>BS1</strain>
    </source>
</reference>
<evidence type="ECO:0000255" key="1">
    <source>
        <dbReference type="HAMAP-Rule" id="MF_01962"/>
    </source>
</evidence>
<accession>B3EL75</accession>
<dbReference type="EC" id="3.5.4.2" evidence="1"/>
<dbReference type="EMBL" id="CP001101">
    <property type="protein sequence ID" value="ACE04663.1"/>
    <property type="molecule type" value="Genomic_DNA"/>
</dbReference>
<dbReference type="SMR" id="B3EL75"/>
<dbReference type="STRING" id="331678.Cphamn1_1745"/>
<dbReference type="KEGG" id="cpb:Cphamn1_1745"/>
<dbReference type="eggNOG" id="COG1816">
    <property type="taxonomic scope" value="Bacteria"/>
</dbReference>
<dbReference type="HOGENOM" id="CLU_039228_7_0_10"/>
<dbReference type="OrthoDB" id="9779574at2"/>
<dbReference type="GO" id="GO:0005829">
    <property type="term" value="C:cytosol"/>
    <property type="evidence" value="ECO:0007669"/>
    <property type="project" value="TreeGrafter"/>
</dbReference>
<dbReference type="GO" id="GO:0000034">
    <property type="term" value="F:adenine deaminase activity"/>
    <property type="evidence" value="ECO:0007669"/>
    <property type="project" value="UniProtKB-UniRule"/>
</dbReference>
<dbReference type="GO" id="GO:0008270">
    <property type="term" value="F:zinc ion binding"/>
    <property type="evidence" value="ECO:0007669"/>
    <property type="project" value="UniProtKB-UniRule"/>
</dbReference>
<dbReference type="GO" id="GO:0006146">
    <property type="term" value="P:adenine catabolic process"/>
    <property type="evidence" value="ECO:0007669"/>
    <property type="project" value="UniProtKB-UniRule"/>
</dbReference>
<dbReference type="GO" id="GO:0043103">
    <property type="term" value="P:hypoxanthine salvage"/>
    <property type="evidence" value="ECO:0007669"/>
    <property type="project" value="UniProtKB-UniRule"/>
</dbReference>
<dbReference type="GO" id="GO:0009117">
    <property type="term" value="P:nucleotide metabolic process"/>
    <property type="evidence" value="ECO:0007669"/>
    <property type="project" value="UniProtKB-KW"/>
</dbReference>
<dbReference type="CDD" id="cd01320">
    <property type="entry name" value="ADA"/>
    <property type="match status" value="1"/>
</dbReference>
<dbReference type="FunFam" id="3.20.20.140:FF:000039">
    <property type="entry name" value="Adenine deaminase"/>
    <property type="match status" value="1"/>
</dbReference>
<dbReference type="Gene3D" id="3.20.20.140">
    <property type="entry name" value="Metal-dependent hydrolases"/>
    <property type="match status" value="1"/>
</dbReference>
<dbReference type="HAMAP" id="MF_01962">
    <property type="entry name" value="Adenine_deaminase"/>
    <property type="match status" value="1"/>
</dbReference>
<dbReference type="InterPro" id="IPR001365">
    <property type="entry name" value="A_deaminase_dom"/>
</dbReference>
<dbReference type="InterPro" id="IPR028892">
    <property type="entry name" value="ADE"/>
</dbReference>
<dbReference type="InterPro" id="IPR006330">
    <property type="entry name" value="Ado/ade_deaminase"/>
</dbReference>
<dbReference type="InterPro" id="IPR032466">
    <property type="entry name" value="Metal_Hydrolase"/>
</dbReference>
<dbReference type="NCBIfam" id="TIGR01430">
    <property type="entry name" value="aden_deam"/>
    <property type="match status" value="1"/>
</dbReference>
<dbReference type="NCBIfam" id="NF006850">
    <property type="entry name" value="PRK09358.1-6"/>
    <property type="match status" value="1"/>
</dbReference>
<dbReference type="PANTHER" id="PTHR43114">
    <property type="entry name" value="ADENINE DEAMINASE"/>
    <property type="match status" value="1"/>
</dbReference>
<dbReference type="PANTHER" id="PTHR43114:SF6">
    <property type="entry name" value="ADENINE DEAMINASE"/>
    <property type="match status" value="1"/>
</dbReference>
<dbReference type="Pfam" id="PF00962">
    <property type="entry name" value="A_deaminase"/>
    <property type="match status" value="1"/>
</dbReference>
<dbReference type="SUPFAM" id="SSF51556">
    <property type="entry name" value="Metallo-dependent hydrolases"/>
    <property type="match status" value="1"/>
</dbReference>